<feature type="chain" id="PRO_0000222133" description="Uncharacterized protein ORF53">
    <location>
        <begin position="1"/>
        <end position="308"/>
    </location>
</feature>
<gene>
    <name type="primary">ORF53</name>
</gene>
<organism>
    <name type="scientific">Ictalurid herpesvirus 1 (strain Auburn)</name>
    <name type="common">IcHV-1</name>
    <name type="synonym">Channel catfish herpesvirus</name>
    <dbReference type="NCBI Taxonomy" id="766178"/>
    <lineage>
        <taxon>Viruses</taxon>
        <taxon>Duplodnaviria</taxon>
        <taxon>Heunggongvirae</taxon>
        <taxon>Peploviricota</taxon>
        <taxon>Herviviricetes</taxon>
        <taxon>Herpesvirales</taxon>
        <taxon>Alloherpesviridae</taxon>
        <taxon>Ictavirus</taxon>
        <taxon>Ictavirus ictaluridallo1</taxon>
        <taxon>Ictalurid herpesvirus 1</taxon>
    </lineage>
</organism>
<reference key="1">
    <citation type="journal article" date="1992" name="Virology">
        <title>Channel catfish virus: a new type of herpesvirus.</title>
        <authorList>
            <person name="Davison A.J."/>
        </authorList>
    </citation>
    <scope>NUCLEOTIDE SEQUENCE [LARGE SCALE GENOMIC DNA]</scope>
</reference>
<accession>Q00119</accession>
<protein>
    <recommendedName>
        <fullName>Uncharacterized protein ORF53</fullName>
    </recommendedName>
</protein>
<keyword id="KW-1185">Reference proteome</keyword>
<sequence>MPMMNTNVGFTRNTCFDDDFRSGRFVVRFEPLIEENAADQGAEIVNQNFLTGDERLLKLLFSSKTNLSHKYTTMKELVMKWNHFRDRFQREIVGRNSRGAALSRAEILQILLDIAQEKTGSTITRAYPRDVSWFFAQLVLGDVDTFVRAVKPAGLITSLTELPGLTTGTVGEGGQNDLYDLVDPSSYICDVHLRRDRSCEGKSIFLIAVPKQDPPLALENFRGLELKVIITDSSLQQVVRQTVADVPIESPRFAVAHLGQCFSRTLAHASFGGWKLYDARLLSRSIEALLPHVPDERPTPLKRIRLLV</sequence>
<organismHost>
    <name type="scientific">Ictaluridae</name>
    <name type="common">bullhead catfishes</name>
    <dbReference type="NCBI Taxonomy" id="7996"/>
</organismHost>
<dbReference type="EMBL" id="M75136">
    <property type="protein sequence ID" value="AAA88156.1"/>
    <property type="molecule type" value="Genomic_DNA"/>
</dbReference>
<dbReference type="PIR" id="I36791">
    <property type="entry name" value="I36791"/>
</dbReference>
<dbReference type="RefSeq" id="NP_041144.1">
    <property type="nucleotide sequence ID" value="NC_001493.2"/>
</dbReference>
<dbReference type="GeneID" id="1488448"/>
<dbReference type="KEGG" id="vg:1488448"/>
<dbReference type="Proteomes" id="UP000007643">
    <property type="component" value="Segment"/>
</dbReference>
<proteinExistence type="predicted"/>
<name>VG53_ICHVA</name>